<keyword id="KW-0378">Hydrolase</keyword>
<keyword id="KW-0460">Magnesium</keyword>
<name>PPAX_BACHK</name>
<protein>
    <recommendedName>
        <fullName evidence="1">Pyrophosphatase PpaX</fullName>
        <ecNumber evidence="1">3.6.1.1</ecNumber>
    </recommendedName>
</protein>
<comment type="function">
    <text evidence="1">Hydrolyzes pyrophosphate formed during P-Ser-HPr dephosphorylation by HPrK/P. Might play a role in controlling the intracellular pyrophosphate pool.</text>
</comment>
<comment type="catalytic activity">
    <reaction evidence="1">
        <text>diphosphate + H2O = 2 phosphate + H(+)</text>
        <dbReference type="Rhea" id="RHEA:24576"/>
        <dbReference type="ChEBI" id="CHEBI:15377"/>
        <dbReference type="ChEBI" id="CHEBI:15378"/>
        <dbReference type="ChEBI" id="CHEBI:33019"/>
        <dbReference type="ChEBI" id="CHEBI:43474"/>
        <dbReference type="EC" id="3.6.1.1"/>
    </reaction>
</comment>
<comment type="cofactor">
    <cofactor evidence="1">
        <name>Mg(2+)</name>
        <dbReference type="ChEBI" id="CHEBI:18420"/>
    </cofactor>
</comment>
<comment type="similarity">
    <text evidence="1">Belongs to the HAD-like hydrolase superfamily. PpaX family.</text>
</comment>
<dbReference type="EC" id="3.6.1.1" evidence="1"/>
<dbReference type="EMBL" id="AE017355">
    <property type="protein sequence ID" value="AAT62581.1"/>
    <property type="molecule type" value="Genomic_DNA"/>
</dbReference>
<dbReference type="RefSeq" id="WP_000700956.1">
    <property type="nucleotide sequence ID" value="NC_005957.1"/>
</dbReference>
<dbReference type="RefSeq" id="YP_039148.1">
    <property type="nucleotide sequence ID" value="NC_005957.1"/>
</dbReference>
<dbReference type="SMR" id="Q6HBC8"/>
<dbReference type="KEGG" id="btk:BT9727_4839"/>
<dbReference type="PATRIC" id="fig|281309.8.peg.5145"/>
<dbReference type="HOGENOM" id="CLU_045011_19_3_9"/>
<dbReference type="Proteomes" id="UP000001301">
    <property type="component" value="Chromosome"/>
</dbReference>
<dbReference type="GO" id="GO:0005829">
    <property type="term" value="C:cytosol"/>
    <property type="evidence" value="ECO:0007669"/>
    <property type="project" value="TreeGrafter"/>
</dbReference>
<dbReference type="GO" id="GO:0004427">
    <property type="term" value="F:inorganic diphosphate phosphatase activity"/>
    <property type="evidence" value="ECO:0007669"/>
    <property type="project" value="UniProtKB-UniRule"/>
</dbReference>
<dbReference type="GO" id="GO:0000287">
    <property type="term" value="F:magnesium ion binding"/>
    <property type="evidence" value="ECO:0007669"/>
    <property type="project" value="UniProtKB-UniRule"/>
</dbReference>
<dbReference type="GO" id="GO:0008967">
    <property type="term" value="F:phosphoglycolate phosphatase activity"/>
    <property type="evidence" value="ECO:0007669"/>
    <property type="project" value="TreeGrafter"/>
</dbReference>
<dbReference type="GO" id="GO:0006281">
    <property type="term" value="P:DNA repair"/>
    <property type="evidence" value="ECO:0007669"/>
    <property type="project" value="TreeGrafter"/>
</dbReference>
<dbReference type="CDD" id="cd02616">
    <property type="entry name" value="HAD_PPase"/>
    <property type="match status" value="1"/>
</dbReference>
<dbReference type="FunFam" id="3.40.50.1000:FF:000022">
    <property type="entry name" value="Phosphoglycolate phosphatase"/>
    <property type="match status" value="1"/>
</dbReference>
<dbReference type="FunFam" id="1.10.150.240:FF:000008">
    <property type="entry name" value="Pyrophosphatase PpaX"/>
    <property type="match status" value="1"/>
</dbReference>
<dbReference type="Gene3D" id="3.40.50.1000">
    <property type="entry name" value="HAD superfamily/HAD-like"/>
    <property type="match status" value="1"/>
</dbReference>
<dbReference type="Gene3D" id="1.10.150.240">
    <property type="entry name" value="Putative phosphatase, domain 2"/>
    <property type="match status" value="1"/>
</dbReference>
<dbReference type="HAMAP" id="MF_01250">
    <property type="entry name" value="Pyrophosphat_PpaX"/>
    <property type="match status" value="1"/>
</dbReference>
<dbReference type="InterPro" id="IPR050155">
    <property type="entry name" value="HAD-like_hydrolase_sf"/>
</dbReference>
<dbReference type="InterPro" id="IPR036412">
    <property type="entry name" value="HAD-like_sf"/>
</dbReference>
<dbReference type="InterPro" id="IPR006439">
    <property type="entry name" value="HAD-SF_hydro_IA"/>
</dbReference>
<dbReference type="InterPro" id="IPR006549">
    <property type="entry name" value="HAD-SF_hydro_IIIA"/>
</dbReference>
<dbReference type="InterPro" id="IPR041492">
    <property type="entry name" value="HAD_2"/>
</dbReference>
<dbReference type="InterPro" id="IPR023214">
    <property type="entry name" value="HAD_sf"/>
</dbReference>
<dbReference type="InterPro" id="IPR023198">
    <property type="entry name" value="PGP-like_dom2"/>
</dbReference>
<dbReference type="InterPro" id="IPR023733">
    <property type="entry name" value="Pyrophosphatase_Ppax"/>
</dbReference>
<dbReference type="NCBIfam" id="TIGR01549">
    <property type="entry name" value="HAD-SF-IA-v1"/>
    <property type="match status" value="1"/>
</dbReference>
<dbReference type="NCBIfam" id="TIGR01509">
    <property type="entry name" value="HAD-SF-IA-v3"/>
    <property type="match status" value="1"/>
</dbReference>
<dbReference type="NCBIfam" id="TIGR01662">
    <property type="entry name" value="HAD-SF-IIIA"/>
    <property type="match status" value="1"/>
</dbReference>
<dbReference type="NCBIfam" id="NF009804">
    <property type="entry name" value="PRK13288.1"/>
    <property type="match status" value="1"/>
</dbReference>
<dbReference type="PANTHER" id="PTHR43434">
    <property type="entry name" value="PHOSPHOGLYCOLATE PHOSPHATASE"/>
    <property type="match status" value="1"/>
</dbReference>
<dbReference type="PANTHER" id="PTHR43434:SF26">
    <property type="entry name" value="PYROPHOSPHATASE PPAX"/>
    <property type="match status" value="1"/>
</dbReference>
<dbReference type="Pfam" id="PF13419">
    <property type="entry name" value="HAD_2"/>
    <property type="match status" value="1"/>
</dbReference>
<dbReference type="PRINTS" id="PR00413">
    <property type="entry name" value="HADHALOGNASE"/>
</dbReference>
<dbReference type="SFLD" id="SFLDG01135">
    <property type="entry name" value="C1.5.6:_HAD__Beta-PGM__Phospha"/>
    <property type="match status" value="1"/>
</dbReference>
<dbReference type="SFLD" id="SFLDG01129">
    <property type="entry name" value="C1.5:_HAD__Beta-PGM__Phosphata"/>
    <property type="match status" value="1"/>
</dbReference>
<dbReference type="SUPFAM" id="SSF56784">
    <property type="entry name" value="HAD-like"/>
    <property type="match status" value="1"/>
</dbReference>
<sequence length="216" mass="24721">MKINTVLFDLDGTLINTNELIISSFLHTLHTYYPNQYKREDVLPFIGPSLHDTFSKIDESKVEELITSYRQFNHDHHDELVEEYETVYETVQELKKQGYKVGIVTTKARQTVEMGLKLSKLDEFFDVVVTIDDVEHVKPHPEPLQKALQLLDAKPEEALMVGDNHHDIVGGQNAGTKTAAVSWTLKGRAYLEAYKPDFMLDKMSDLLPILSDMNRS</sequence>
<accession>Q6HBC8</accession>
<feature type="chain" id="PRO_0000056838" description="Pyrophosphatase PpaX">
    <location>
        <begin position="1"/>
        <end position="216"/>
    </location>
</feature>
<feature type="active site" description="Nucleophile" evidence="1">
    <location>
        <position position="9"/>
    </location>
</feature>
<gene>
    <name evidence="1" type="primary">ppaX</name>
    <name type="ordered locus">BT9727_4839</name>
</gene>
<reference key="1">
    <citation type="journal article" date="2006" name="J. Bacteriol.">
        <title>Pathogenomic sequence analysis of Bacillus cereus and Bacillus thuringiensis isolates closely related to Bacillus anthracis.</title>
        <authorList>
            <person name="Han C.S."/>
            <person name="Xie G."/>
            <person name="Challacombe J.F."/>
            <person name="Altherr M.R."/>
            <person name="Bhotika S.S."/>
            <person name="Bruce D."/>
            <person name="Campbell C.S."/>
            <person name="Campbell M.L."/>
            <person name="Chen J."/>
            <person name="Chertkov O."/>
            <person name="Cleland C."/>
            <person name="Dimitrijevic M."/>
            <person name="Doggett N.A."/>
            <person name="Fawcett J.J."/>
            <person name="Glavina T."/>
            <person name="Goodwin L.A."/>
            <person name="Hill K.K."/>
            <person name="Hitchcock P."/>
            <person name="Jackson P.J."/>
            <person name="Keim P."/>
            <person name="Kewalramani A.R."/>
            <person name="Longmire J."/>
            <person name="Lucas S."/>
            <person name="Malfatti S."/>
            <person name="McMurry K."/>
            <person name="Meincke L.J."/>
            <person name="Misra M."/>
            <person name="Moseman B.L."/>
            <person name="Mundt M."/>
            <person name="Munk A.C."/>
            <person name="Okinaka R.T."/>
            <person name="Parson-Quintana B."/>
            <person name="Reilly L.P."/>
            <person name="Richardson P."/>
            <person name="Robinson D.L."/>
            <person name="Rubin E."/>
            <person name="Saunders E."/>
            <person name="Tapia R."/>
            <person name="Tesmer J.G."/>
            <person name="Thayer N."/>
            <person name="Thompson L.S."/>
            <person name="Tice H."/>
            <person name="Ticknor L.O."/>
            <person name="Wills P.L."/>
            <person name="Brettin T.S."/>
            <person name="Gilna P."/>
        </authorList>
    </citation>
    <scope>NUCLEOTIDE SEQUENCE [LARGE SCALE GENOMIC DNA]</scope>
    <source>
        <strain>97-27</strain>
    </source>
</reference>
<organism>
    <name type="scientific">Bacillus thuringiensis subsp. konkukian (strain 97-27)</name>
    <dbReference type="NCBI Taxonomy" id="281309"/>
    <lineage>
        <taxon>Bacteria</taxon>
        <taxon>Bacillati</taxon>
        <taxon>Bacillota</taxon>
        <taxon>Bacilli</taxon>
        <taxon>Bacillales</taxon>
        <taxon>Bacillaceae</taxon>
        <taxon>Bacillus</taxon>
        <taxon>Bacillus cereus group</taxon>
    </lineage>
</organism>
<proteinExistence type="inferred from homology"/>
<evidence type="ECO:0000255" key="1">
    <source>
        <dbReference type="HAMAP-Rule" id="MF_01250"/>
    </source>
</evidence>